<gene>
    <name evidence="1" type="primary">rps24e</name>
    <name type="ordered locus">Mpal_0600</name>
</gene>
<accession>B8GFC3</accession>
<reference key="1">
    <citation type="journal article" date="2015" name="Genome Announc.">
        <title>Complete Genome Sequence of Methanosphaerula palustris E1-9CT, a Hydrogenotrophic Methanogen Isolated from a Minerotrophic Fen Peatland.</title>
        <authorList>
            <person name="Cadillo-Quiroz H."/>
            <person name="Browne P."/>
            <person name="Kyrpides N."/>
            <person name="Woyke T."/>
            <person name="Goodwin L."/>
            <person name="Detter C."/>
            <person name="Yavitt J.B."/>
            <person name="Zinder S.H."/>
        </authorList>
    </citation>
    <scope>NUCLEOTIDE SEQUENCE [LARGE SCALE GENOMIC DNA]</scope>
    <source>
        <strain>ATCC BAA-1556 / DSM 19958 / E1-9c</strain>
    </source>
</reference>
<proteinExistence type="inferred from homology"/>
<feature type="chain" id="PRO_1000146596" description="Small ribosomal subunit protein eS24">
    <location>
        <begin position="1"/>
        <end position="98"/>
    </location>
</feature>
<feature type="region of interest" description="Disordered" evidence="2">
    <location>
        <begin position="76"/>
        <end position="98"/>
    </location>
</feature>
<feature type="compositionally biased region" description="Basic and acidic residues" evidence="2">
    <location>
        <begin position="89"/>
        <end position="98"/>
    </location>
</feature>
<name>RS24_METPE</name>
<organism>
    <name type="scientific">Methanosphaerula palustris (strain ATCC BAA-1556 / DSM 19958 / E1-9c)</name>
    <dbReference type="NCBI Taxonomy" id="521011"/>
    <lineage>
        <taxon>Archaea</taxon>
        <taxon>Methanobacteriati</taxon>
        <taxon>Methanobacteriota</taxon>
        <taxon>Stenosarchaea group</taxon>
        <taxon>Methanomicrobia</taxon>
        <taxon>Methanomicrobiales</taxon>
        <taxon>Methanoregulaceae</taxon>
        <taxon>Methanosphaerula</taxon>
    </lineage>
</organism>
<comment type="similarity">
    <text evidence="1">Belongs to the eukaryotic ribosomal protein eS24 family.</text>
</comment>
<sequence>MEFEITSDTRNELLGRRELRFILTYDGATPSRKEIRGKLCALNNINENLVVLDSLRTGYGRMQLDGFMRIYDTEEGRQRTERSYLLNRGEPKKEEEEA</sequence>
<dbReference type="EMBL" id="CP001338">
    <property type="protein sequence ID" value="ACL15971.1"/>
    <property type="molecule type" value="Genomic_DNA"/>
</dbReference>
<dbReference type="RefSeq" id="WP_012617290.1">
    <property type="nucleotide sequence ID" value="NC_011832.1"/>
</dbReference>
<dbReference type="SMR" id="B8GFC3"/>
<dbReference type="STRING" id="521011.Mpal_0600"/>
<dbReference type="GeneID" id="7270187"/>
<dbReference type="KEGG" id="mpl:Mpal_0600"/>
<dbReference type="eggNOG" id="arCOG04182">
    <property type="taxonomic scope" value="Archaea"/>
</dbReference>
<dbReference type="HOGENOM" id="CLU_107248_3_1_2"/>
<dbReference type="OrthoDB" id="27533at2157"/>
<dbReference type="Proteomes" id="UP000002457">
    <property type="component" value="Chromosome"/>
</dbReference>
<dbReference type="GO" id="GO:1990904">
    <property type="term" value="C:ribonucleoprotein complex"/>
    <property type="evidence" value="ECO:0007669"/>
    <property type="project" value="UniProtKB-KW"/>
</dbReference>
<dbReference type="GO" id="GO:0005840">
    <property type="term" value="C:ribosome"/>
    <property type="evidence" value="ECO:0007669"/>
    <property type="project" value="UniProtKB-KW"/>
</dbReference>
<dbReference type="GO" id="GO:0003735">
    <property type="term" value="F:structural constituent of ribosome"/>
    <property type="evidence" value="ECO:0007669"/>
    <property type="project" value="InterPro"/>
</dbReference>
<dbReference type="GO" id="GO:0006412">
    <property type="term" value="P:translation"/>
    <property type="evidence" value="ECO:0007669"/>
    <property type="project" value="UniProtKB-UniRule"/>
</dbReference>
<dbReference type="Gene3D" id="3.30.70.330">
    <property type="match status" value="1"/>
</dbReference>
<dbReference type="HAMAP" id="MF_00545">
    <property type="entry name" value="Ribosomal_eS24"/>
    <property type="match status" value="1"/>
</dbReference>
<dbReference type="InterPro" id="IPR012677">
    <property type="entry name" value="Nucleotide-bd_a/b_plait_sf"/>
</dbReference>
<dbReference type="InterPro" id="IPR001976">
    <property type="entry name" value="Ribosomal_eS24"/>
</dbReference>
<dbReference type="InterPro" id="IPR012678">
    <property type="entry name" value="Ribosomal_uL23/eL15/eS24_sf"/>
</dbReference>
<dbReference type="Pfam" id="PF01282">
    <property type="entry name" value="Ribosomal_S24e"/>
    <property type="match status" value="1"/>
</dbReference>
<dbReference type="SUPFAM" id="SSF54189">
    <property type="entry name" value="Ribosomal proteins S24e, L23 and L15e"/>
    <property type="match status" value="1"/>
</dbReference>
<protein>
    <recommendedName>
        <fullName evidence="1">Small ribosomal subunit protein eS24</fullName>
    </recommendedName>
    <alternativeName>
        <fullName evidence="3">30S ribosomal protein S24e</fullName>
    </alternativeName>
</protein>
<keyword id="KW-1185">Reference proteome</keyword>
<keyword id="KW-0687">Ribonucleoprotein</keyword>
<keyword id="KW-0689">Ribosomal protein</keyword>
<evidence type="ECO:0000255" key="1">
    <source>
        <dbReference type="HAMAP-Rule" id="MF_00545"/>
    </source>
</evidence>
<evidence type="ECO:0000256" key="2">
    <source>
        <dbReference type="SAM" id="MobiDB-lite"/>
    </source>
</evidence>
<evidence type="ECO:0000305" key="3"/>